<accession>Q6XT33</accession>
<proteinExistence type="inferred from homology"/>
<organismHost>
    <name type="scientific">Aves</name>
    <dbReference type="NCBI Taxonomy" id="8782"/>
</organismHost>
<organismHost>
    <name type="scientific">Cetacea</name>
    <name type="common">whales</name>
    <dbReference type="NCBI Taxonomy" id="9721"/>
</organismHost>
<organismHost>
    <name type="scientific">Homo sapiens</name>
    <name type="common">Human</name>
    <dbReference type="NCBI Taxonomy" id="9606"/>
</organismHost>
<organismHost>
    <name type="scientific">Phocidae</name>
    <name type="common">true seals</name>
    <dbReference type="NCBI Taxonomy" id="9709"/>
</organismHost>
<organismHost>
    <name type="scientific">Sus scrofa</name>
    <name type="common">Pig</name>
    <dbReference type="NCBI Taxonomy" id="9823"/>
</organismHost>
<keyword id="KW-0025">Alternative splicing</keyword>
<keyword id="KW-1015">Disulfide bond</keyword>
<keyword id="KW-0325">Glycoprotein</keyword>
<keyword id="KW-1032">Host cell membrane</keyword>
<keyword id="KW-1043">Host membrane</keyword>
<keyword id="KW-0945">Host-virus interaction</keyword>
<keyword id="KW-0375">Hydrogen ion transport</keyword>
<keyword id="KW-1083">Inhibition of host autophagy by virus</keyword>
<keyword id="KW-0407">Ion channel</keyword>
<keyword id="KW-0406">Ion transport</keyword>
<keyword id="KW-0449">Lipoprotein</keyword>
<keyword id="KW-0472">Membrane</keyword>
<keyword id="KW-0564">Palmitate</keyword>
<keyword id="KW-0597">Phosphoprotein</keyword>
<keyword id="KW-0735">Signal-anchor</keyword>
<keyword id="KW-0812">Transmembrane</keyword>
<keyword id="KW-1133">Transmembrane helix</keyword>
<keyword id="KW-0813">Transport</keyword>
<keyword id="KW-1182">Viral ion channel</keyword>
<keyword id="KW-0946">Virion</keyword>
<evidence type="ECO:0000255" key="1">
    <source>
        <dbReference type="HAMAP-Rule" id="MF_04069"/>
    </source>
</evidence>
<evidence type="ECO:0000256" key="2">
    <source>
        <dbReference type="SAM" id="MobiDB-lite"/>
    </source>
</evidence>
<gene>
    <name evidence="1" type="primary">M</name>
</gene>
<feature type="chain" id="PRO_0000326350" description="Matrix protein 2">
    <location>
        <begin position="1"/>
        <end position="97"/>
    </location>
</feature>
<feature type="topological domain" description="Virion surface" evidence="1">
    <location>
        <begin position="1"/>
        <end position="22"/>
    </location>
</feature>
<feature type="transmembrane region" description="Helical; Signal-anchor for type III membrane protein" evidence="1">
    <location>
        <begin position="23"/>
        <end position="43"/>
    </location>
</feature>
<feature type="topological domain" description="Intravirion" evidence="1">
    <location>
        <begin position="44"/>
        <end position="97"/>
    </location>
</feature>
<feature type="region of interest" description="Disordered" evidence="2">
    <location>
        <begin position="60"/>
        <end position="88"/>
    </location>
</feature>
<feature type="compositionally biased region" description="Basic and acidic residues" evidence="2">
    <location>
        <begin position="71"/>
        <end position="80"/>
    </location>
</feature>
<feature type="site" description="Essential for channel activity, possibly by being protonated during channel activation, and by forming the channel gate and the selective filter" evidence="1">
    <location>
        <position position="37"/>
    </location>
</feature>
<feature type="site" description="Seems to be involved in pH gating" evidence="1">
    <location>
        <position position="41"/>
    </location>
</feature>
<feature type="modified residue" description="Phosphoserine; by host" evidence="1">
    <location>
        <position position="64"/>
    </location>
</feature>
<feature type="modified residue" description="Phosphoserine; by host" evidence="1">
    <location>
        <position position="82"/>
    </location>
</feature>
<feature type="modified residue" description="Phosphoserine; by host" evidence="1">
    <location>
        <position position="93"/>
    </location>
</feature>
<feature type="lipid moiety-binding region" description="S-palmitoyl cysteine; by host" evidence="1">
    <location>
        <position position="50"/>
    </location>
</feature>
<feature type="glycosylation site" description="N-linked (GlcNAc...) asparagine; by host" evidence="1">
    <location>
        <position position="20"/>
    </location>
</feature>
<feature type="disulfide bond" description="Interchain (with C-17)" evidence="1">
    <location>
        <position position="17"/>
    </location>
</feature>
<feature type="disulfide bond" description="Interchain (with C-19)" evidence="1">
    <location>
        <position position="19"/>
    </location>
</feature>
<sequence>MSLLTEVETPIRNEWGCRCNDSSDPLVVAASIIGILHLILWILDRLFFKCIYRFFEHGLKRGPSTEGVPESMREEYRKEQQSAVDADDSHFVSIELE</sequence>
<reference key="1">
    <citation type="journal article" date="2004" name="Virology">
        <title>Genetic analysis of human H2N2 and early H3N2 influenza viruses, 1957-1972: evidence for genetic divergence and multiple reassortment events.</title>
        <authorList>
            <person name="Lindstrom S.E."/>
            <person name="Cox N.J."/>
            <person name="Klimov A."/>
        </authorList>
    </citation>
    <scope>NUCLEOTIDE SEQUENCE [GENOMIC RNA]</scope>
</reference>
<dbReference type="EMBL" id="AY210259">
    <property type="protein sequence ID" value="AAO46692.1"/>
    <property type="molecule type" value="Genomic_RNA"/>
</dbReference>
<dbReference type="SMR" id="Q6XT33"/>
<dbReference type="IntAct" id="Q6XT33">
    <property type="interactions" value="1"/>
</dbReference>
<dbReference type="GlyCosmos" id="Q6XT33">
    <property type="glycosylation" value="1 site, No reported glycans"/>
</dbReference>
<dbReference type="GO" id="GO:0020002">
    <property type="term" value="C:host cell plasma membrane"/>
    <property type="evidence" value="ECO:0007669"/>
    <property type="project" value="UniProtKB-SubCell"/>
</dbReference>
<dbReference type="GO" id="GO:0016020">
    <property type="term" value="C:membrane"/>
    <property type="evidence" value="ECO:0007669"/>
    <property type="project" value="UniProtKB-UniRule"/>
</dbReference>
<dbReference type="GO" id="GO:0055036">
    <property type="term" value="C:virion membrane"/>
    <property type="evidence" value="ECO:0007669"/>
    <property type="project" value="UniProtKB-SubCell"/>
</dbReference>
<dbReference type="GO" id="GO:0005216">
    <property type="term" value="F:monoatomic ion channel activity"/>
    <property type="evidence" value="ECO:0007669"/>
    <property type="project" value="UniProtKB-UniRule"/>
</dbReference>
<dbReference type="GO" id="GO:0015078">
    <property type="term" value="F:proton transmembrane transporter activity"/>
    <property type="evidence" value="ECO:0007669"/>
    <property type="project" value="UniProtKB-UniRule"/>
</dbReference>
<dbReference type="GO" id="GO:0051259">
    <property type="term" value="P:protein complex oligomerization"/>
    <property type="evidence" value="ECO:0007669"/>
    <property type="project" value="UniProtKB-UniRule"/>
</dbReference>
<dbReference type="GO" id="GO:0044694">
    <property type="term" value="P:symbiont genome entry into host cell via pore formation in plasma membrane"/>
    <property type="evidence" value="ECO:0007669"/>
    <property type="project" value="UniProtKB-UniRule"/>
</dbReference>
<dbReference type="GO" id="GO:0140321">
    <property type="term" value="P:symbiont-mediated suppression of host autophagy"/>
    <property type="evidence" value="ECO:0007669"/>
    <property type="project" value="UniProtKB-KW"/>
</dbReference>
<dbReference type="Gene3D" id="6.10.250.1640">
    <property type="match status" value="1"/>
</dbReference>
<dbReference type="HAMAP" id="MF_04069">
    <property type="entry name" value="INFV_M2"/>
    <property type="match status" value="1"/>
</dbReference>
<dbReference type="InterPro" id="IPR002089">
    <property type="entry name" value="Flu_M2"/>
</dbReference>
<dbReference type="Pfam" id="PF00599">
    <property type="entry name" value="Flu_M2"/>
    <property type="match status" value="1"/>
</dbReference>
<organism>
    <name type="scientific">Influenza A virus (strain A/Qu/7/1970 H3N2)</name>
    <dbReference type="NCBI Taxonomy" id="221016"/>
    <lineage>
        <taxon>Viruses</taxon>
        <taxon>Riboviria</taxon>
        <taxon>Orthornavirae</taxon>
        <taxon>Negarnaviricota</taxon>
        <taxon>Polyploviricotina</taxon>
        <taxon>Insthoviricetes</taxon>
        <taxon>Articulavirales</taxon>
        <taxon>Orthomyxoviridae</taxon>
        <taxon>Alphainfluenzavirus</taxon>
        <taxon>Alphainfluenzavirus influenzae</taxon>
        <taxon>Influenza A virus</taxon>
    </lineage>
</organism>
<comment type="function">
    <text evidence="1">Forms a proton-selective ion channel that is necessary for the efficient release of the viral genome during virus entry. After attaching to the cell surface, the virion enters the cell by endocytosis. Acidification of the endosome triggers M2 ion channel activity. The influx of protons into virion interior is believed to disrupt interactions between the viral ribonucleoprotein (RNP), matrix protein 1 (M1), and lipid bilayers, thereby freeing the viral genome from interaction with viral proteins and enabling RNA segments to migrate to the host cell nucleus, where influenza virus RNA transcription and replication occur. Also plays a role in viral proteins secretory pathway. Elevates the intravesicular pH of normally acidic compartments, such as trans-Golgi network, preventing newly formed hemagglutinin from premature switching to the fusion-active conformation.</text>
</comment>
<comment type="activity regulation">
    <text>The M2 protein from most influenza A strains is inhibited by amantadine and rimantadine, resulting in viral uncoating incapacity. Emergence of amantadine-resistant variants is usually rapid.</text>
</comment>
<comment type="subunit">
    <text evidence="1">Homotetramer; composed of two disulfide-linked dimers held together by non-covalent interactions. May interact with matrix protein 1.</text>
</comment>
<comment type="subcellular location">
    <subcellularLocation>
        <location evidence="1">Virion membrane</location>
    </subcellularLocation>
    <subcellularLocation>
        <location evidence="1">Host apical cell membrane</location>
        <topology evidence="1">Single-pass type III membrane protein</topology>
    </subcellularLocation>
    <text evidence="1">Abundantly expressed at the apical plasma membrane in infected polarized epithelial cells, in close proximity to budding and assembled virions. Minor component of virions (only 16-20 molecules/virion).</text>
</comment>
<comment type="alternative products">
    <event type="alternative splicing"/>
    <isoform>
        <id>Q6XT33-1</id>
        <name>M2</name>
        <sequence type="displayed"/>
    </isoform>
    <isoform>
        <id>Q6XT32-1</id>
        <name>M1</name>
        <sequence type="external"/>
    </isoform>
    <text>Only the first 9 residues are shared by the 2 isoforms.</text>
</comment>
<comment type="domain">
    <text evidence="1">Cytoplasmic tail plays an important role in virion assembly and morphogenesis.</text>
</comment>
<comment type="miscellaneous">
    <text evidence="1">When the channel is activated, one or more imidazole moieties of His-37 probably become bi-protonated.</text>
</comment>
<comment type="similarity">
    <text evidence="1">Belongs to the influenza viruses matrix protein M2 family.</text>
</comment>
<name>M2_I70A0</name>
<protein>
    <recommendedName>
        <fullName evidence="1">Matrix protein 2</fullName>
    </recommendedName>
    <alternativeName>
        <fullName evidence="1">Proton channel protein M2</fullName>
    </alternativeName>
</protein>